<feature type="chain" id="PRO_0000068579" description="Aminoglycoside (3'') (9) adenylyltransferase">
    <location>
        <begin position="1"/>
        <end position="263"/>
    </location>
</feature>
<feature type="sequence variant" description="In transposon Tn21.">
    <original>I</original>
    <variation>M</variation>
    <location>
        <position position="96"/>
    </location>
</feature>
<feature type="sequence variant" description="In transposon Tn21.">
    <original>D</original>
    <variation>E</variation>
    <location>
        <position position="128"/>
    </location>
</feature>
<feature type="sequence variant" description="In plasmid pLMO229.">
    <original>K</original>
    <variation>R</variation>
    <location>
        <position position="201"/>
    </location>
</feature>
<feature type="sequence variant" description="In transposon Tn7.">
    <location>
        <position position="236"/>
    </location>
</feature>
<feature type="helix" evidence="8">
    <location>
        <begin position="10"/>
        <end position="24"/>
    </location>
</feature>
<feature type="helix" evidence="8">
    <location>
        <begin position="25"/>
        <end position="27"/>
    </location>
</feature>
<feature type="strand" evidence="8">
    <location>
        <begin position="28"/>
        <end position="34"/>
    </location>
</feature>
<feature type="helix" evidence="8">
    <location>
        <begin position="35"/>
        <end position="37"/>
    </location>
</feature>
<feature type="turn" evidence="8">
    <location>
        <begin position="38"/>
        <end position="40"/>
    </location>
</feature>
<feature type="strand" evidence="8">
    <location>
        <begin position="48"/>
        <end position="56"/>
    </location>
</feature>
<feature type="helix" evidence="8">
    <location>
        <begin position="60"/>
        <end position="72"/>
    </location>
</feature>
<feature type="strand" evidence="8">
    <location>
        <begin position="86"/>
        <end position="92"/>
    </location>
</feature>
<feature type="helix" evidence="8">
    <location>
        <begin position="93"/>
        <end position="96"/>
    </location>
</feature>
<feature type="strand" evidence="8">
    <location>
        <begin position="101"/>
        <end position="105"/>
    </location>
</feature>
<feature type="strand" evidence="8">
    <location>
        <begin position="107"/>
        <end position="109"/>
    </location>
</feature>
<feature type="helix" evidence="8">
    <location>
        <begin position="111"/>
        <end position="113"/>
    </location>
</feature>
<feature type="helix" evidence="8">
    <location>
        <begin position="114"/>
        <end position="118"/>
    </location>
</feature>
<feature type="strand" evidence="8">
    <location>
        <begin position="126"/>
        <end position="128"/>
    </location>
</feature>
<feature type="helix" evidence="8">
    <location>
        <begin position="131"/>
        <end position="140"/>
    </location>
</feature>
<feature type="strand" evidence="8">
    <location>
        <begin position="141"/>
        <end position="148"/>
    </location>
</feature>
<feature type="helix" evidence="8">
    <location>
        <begin position="150"/>
        <end position="153"/>
    </location>
</feature>
<feature type="helix" evidence="8">
    <location>
        <begin position="159"/>
        <end position="169"/>
    </location>
</feature>
<feature type="helix" evidence="8">
    <location>
        <begin position="170"/>
        <end position="172"/>
    </location>
</feature>
<feature type="helix" evidence="8">
    <location>
        <begin position="176"/>
        <end position="179"/>
    </location>
</feature>
<feature type="helix" evidence="8">
    <location>
        <begin position="183"/>
        <end position="199"/>
    </location>
</feature>
<feature type="helix" evidence="8">
    <location>
        <begin position="205"/>
        <end position="214"/>
    </location>
</feature>
<feature type="turn" evidence="8">
    <location>
        <begin position="218"/>
        <end position="220"/>
    </location>
</feature>
<feature type="helix" evidence="8">
    <location>
        <begin position="221"/>
        <end position="231"/>
    </location>
</feature>
<feature type="turn" evidence="8">
    <location>
        <begin position="239"/>
        <end position="242"/>
    </location>
</feature>
<feature type="helix" evidence="8">
    <location>
        <begin position="243"/>
        <end position="259"/>
    </location>
</feature>
<accession>P0AG05</accession>
<accession>P04826</accession>
<organism>
    <name type="scientific">Escherichia coli</name>
    <dbReference type="NCBI Taxonomy" id="562"/>
    <lineage>
        <taxon>Bacteria</taxon>
        <taxon>Pseudomonadati</taxon>
        <taxon>Pseudomonadota</taxon>
        <taxon>Gammaproteobacteria</taxon>
        <taxon>Enterobacterales</taxon>
        <taxon>Enterobacteriaceae</taxon>
        <taxon>Escherichia</taxon>
    </lineage>
</organism>
<keyword id="KW-0002">3D-structure</keyword>
<keyword id="KW-0046">Antibiotic resistance</keyword>
<keyword id="KW-0067">ATP-binding</keyword>
<keyword id="KW-0547">Nucleotide-binding</keyword>
<keyword id="KW-0548">Nucleotidyltransferase</keyword>
<keyword id="KW-0614">Plasmid</keyword>
<keyword id="KW-0808">Transferase</keyword>
<keyword id="KW-0814">Transposable element</keyword>
<geneLocation type="plasmid">
    <name>IncFII R538-1</name>
</geneLocation>
<geneLocation type="plasmid">
    <name>IncN R46</name>
</geneLocation>
<geneLocation type="plasmid">
    <name>RGN238</name>
</geneLocation>
<geneLocation type="plasmid">
    <name>pLMO229</name>
</geneLocation>
<geneLocation type="plasmid">
    <name>IncN pKM101</name>
</geneLocation>
<gene>
    <name evidence="3 4" type="primary">aadA</name>
</gene>
<protein>
    <recommendedName>
        <fullName>Aminoglycoside (3'') (9) adenylyltransferase</fullName>
        <ecNumber>2.7.7.47</ecNumber>
    </recommendedName>
    <alternativeName>
        <fullName evidence="3">Aminoglycoside 3''-adenylyltransferase</fullName>
        <shortName evidence="3 4">AAD(3'') (9) adenylyltransferase</shortName>
    </alternativeName>
    <alternativeName>
        <fullName>Streptomycin 3''-adenylyltransferase</fullName>
    </alternativeName>
</protein>
<dbReference type="EC" id="2.7.7.47"/>
<dbReference type="EMBL" id="X03043">
    <property type="protein sequence ID" value="CAA26848.1"/>
    <property type="molecule type" value="Genomic_DNA"/>
</dbReference>
<dbReference type="EMBL" id="M86913">
    <property type="protein sequence ID" value="AAA72106.1"/>
    <property type="molecule type" value="Genomic_DNA"/>
</dbReference>
<dbReference type="EMBL" id="X02340">
    <property type="protein sequence ID" value="CAA26199.1"/>
    <property type="status" value="ALT_INIT"/>
    <property type="molecule type" value="Genomic_DNA"/>
</dbReference>
<dbReference type="EMBL" id="Y00358">
    <property type="protein sequence ID" value="CAA68436.1"/>
    <property type="molecule type" value="Genomic_DNA"/>
</dbReference>
<dbReference type="EMBL" id="X12870">
    <property type="protein sequence ID" value="CAA31362.1"/>
    <property type="molecule type" value="Genomic_DNA"/>
</dbReference>
<dbReference type="EMBL" id="J02967">
    <property type="protein sequence ID" value="AAA91587.1"/>
    <property type="molecule type" value="Genomic_DNA"/>
</dbReference>
<dbReference type="EMBL" id="X17478">
    <property type="protein sequence ID" value="CAA35513.1"/>
    <property type="molecule type" value="Genomic_DNA"/>
</dbReference>
<dbReference type="EMBL" id="X17479">
    <property type="protein sequence ID" value="CAA35514.1"/>
    <property type="molecule type" value="Genomic_DNA"/>
</dbReference>
<dbReference type="PIR" id="A24273">
    <property type="entry name" value="XUECSA"/>
</dbReference>
<dbReference type="PIR" id="I40986">
    <property type="entry name" value="I40986"/>
</dbReference>
<dbReference type="PIR" id="JH0244">
    <property type="entry name" value="JH0244"/>
</dbReference>
<dbReference type="PIR" id="S05476">
    <property type="entry name" value="S05476"/>
</dbReference>
<dbReference type="PIR" id="S11704">
    <property type="entry name" value="S11704"/>
</dbReference>
<dbReference type="PIR" id="S11707">
    <property type="entry name" value="S11707"/>
</dbReference>
<dbReference type="RefSeq" id="NP_065311.1">
    <property type="nucleotide sequence ID" value="NC_002525.1"/>
</dbReference>
<dbReference type="RefSeq" id="NP_863002.1">
    <property type="nucleotide sequence ID" value="NC_004998.1"/>
</dbReference>
<dbReference type="RefSeq" id="YP_006903505.1">
    <property type="nucleotide sequence ID" value="NC_019043.1"/>
</dbReference>
<dbReference type="RefSeq" id="YP_006952405.1">
    <property type="nucleotide sequence ID" value="NC_019062.1"/>
</dbReference>
<dbReference type="RefSeq" id="YP_009068492.1">
    <property type="nucleotide sequence ID" value="NC_025141.1"/>
</dbReference>
<dbReference type="PDB" id="7UY4">
    <property type="method" value="X-ray"/>
    <property type="resolution" value="1.98 A"/>
    <property type="chains" value="A/B=5-262"/>
</dbReference>
<dbReference type="PDBsum" id="7UY4"/>
<dbReference type="SMR" id="P0AG05"/>
<dbReference type="CARD" id="ARO:3002601">
    <property type="molecule name" value="aadA"/>
    <property type="mechanism identifier" value="ARO:0001004"/>
    <property type="mechanism name" value="antibiotic inactivation"/>
</dbReference>
<dbReference type="KEGG" id="ag:CAA26199"/>
<dbReference type="OMA" id="VRPWRYP"/>
<dbReference type="GO" id="GO:0070566">
    <property type="term" value="F:adenylyltransferase activity"/>
    <property type="evidence" value="ECO:0007669"/>
    <property type="project" value="InterPro"/>
</dbReference>
<dbReference type="GO" id="GO:0009012">
    <property type="term" value="F:aminoglycoside 3''-adenylyltransferase activity"/>
    <property type="evidence" value="ECO:0007669"/>
    <property type="project" value="UniProtKB-EC"/>
</dbReference>
<dbReference type="GO" id="GO:0005524">
    <property type="term" value="F:ATP binding"/>
    <property type="evidence" value="ECO:0007669"/>
    <property type="project" value="UniProtKB-KW"/>
</dbReference>
<dbReference type="GO" id="GO:0046677">
    <property type="term" value="P:response to antibiotic"/>
    <property type="evidence" value="ECO:0007669"/>
    <property type="project" value="UniProtKB-KW"/>
</dbReference>
<dbReference type="CDD" id="cd05403">
    <property type="entry name" value="NT_KNTase_like"/>
    <property type="match status" value="1"/>
</dbReference>
<dbReference type="Gene3D" id="3.30.460.10">
    <property type="entry name" value="Beta Polymerase, domain 2"/>
    <property type="match status" value="1"/>
</dbReference>
<dbReference type="InterPro" id="IPR024172">
    <property type="entry name" value="AadA/Aad9"/>
</dbReference>
<dbReference type="InterPro" id="IPR025184">
    <property type="entry name" value="AadA_C"/>
</dbReference>
<dbReference type="InterPro" id="IPR043519">
    <property type="entry name" value="NT_sf"/>
</dbReference>
<dbReference type="InterPro" id="IPR002934">
    <property type="entry name" value="Polymerase_NTP_transf_dom"/>
</dbReference>
<dbReference type="NCBIfam" id="NF033126">
    <property type="entry name" value="ANT_3pp_AadA1"/>
    <property type="match status" value="1"/>
</dbReference>
<dbReference type="NCBIfam" id="NF012157">
    <property type="entry name" value="ANT_3pp_I"/>
    <property type="match status" value="1"/>
</dbReference>
<dbReference type="NCBIfam" id="NF010309">
    <property type="entry name" value="PRK13746.1"/>
    <property type="match status" value="1"/>
</dbReference>
<dbReference type="Pfam" id="PF13427">
    <property type="entry name" value="AadA_C"/>
    <property type="match status" value="1"/>
</dbReference>
<dbReference type="Pfam" id="PF01909">
    <property type="entry name" value="NTP_transf_2"/>
    <property type="match status" value="1"/>
</dbReference>
<dbReference type="PIRSF" id="PIRSF000819">
    <property type="entry name" value="Streptomycin_3-adenylyltransf"/>
    <property type="match status" value="1"/>
</dbReference>
<dbReference type="SUPFAM" id="SSF81301">
    <property type="entry name" value="Nucleotidyltransferase"/>
    <property type="match status" value="1"/>
</dbReference>
<sequence>MREAVIAEVSTQLSEVVGVIERHLEPTLLAVHLYGSAVDGGLKPHSDIDLLVTVTVRLDETTRRALINDLLETSASPGESEILRAVEVTIVVHDDIIPWRYPAKRELQFGEWQRNDILAGIFEPATIDIDLAILLTKAREHSVALVGPAAEELFDPVPEQDLFEALNETLTLWNSPPDWAGDERNVVLTLSRIWYSAVTGKIAPKDVAADWAMERLPAQYQPVILEARQAYLGQEEDRLASRADQLEEFVHYVKGEITKVVGK</sequence>
<proteinExistence type="evidence at protein level"/>
<comment type="function">
    <text evidence="1 2">Mediates bacterial resistance to the antibiotics streptomycin and spectinomycin.</text>
</comment>
<comment type="catalytic activity">
    <reaction evidence="6 7">
        <text>streptomycin + ATP = 3''-O-adenylylstreptomycin + diphosphate</text>
        <dbReference type="Rhea" id="RHEA:20245"/>
        <dbReference type="ChEBI" id="CHEBI:30616"/>
        <dbReference type="ChEBI" id="CHEBI:33019"/>
        <dbReference type="ChEBI" id="CHEBI:58007"/>
        <dbReference type="ChEBI" id="CHEBI:58605"/>
        <dbReference type="EC" id="2.7.7.47"/>
    </reaction>
</comment>
<comment type="catalytic activity">
    <reaction evidence="6 7">
        <text>spectinomycin + ATP = 9-O-adenylylspectinomycin + diphosphate</text>
        <dbReference type="Rhea" id="RHEA:63228"/>
        <dbReference type="ChEBI" id="CHEBI:30616"/>
        <dbReference type="ChEBI" id="CHEBI:33019"/>
        <dbReference type="ChEBI" id="CHEBI:146260"/>
        <dbReference type="ChEBI" id="CHEBI:146261"/>
    </reaction>
</comment>
<comment type="disruption phenotype">
    <text evidence="1 2">Loss of resistance to streptomycin and spectinomycin.</text>
</comment>
<comment type="sequence caution" evidence="5">
    <conflict type="erroneous initiation">
        <sequence resource="EMBL-CDS" id="CAA26199"/>
    </conflict>
    <text>Truncated N-terminus.</text>
</comment>
<evidence type="ECO:0000269" key="1">
    <source>
    </source>
</evidence>
<evidence type="ECO:0000269" key="2">
    <source>
    </source>
</evidence>
<evidence type="ECO:0000303" key="3">
    <source>
    </source>
</evidence>
<evidence type="ECO:0000303" key="4">
    <source>
    </source>
</evidence>
<evidence type="ECO:0000305" key="5"/>
<evidence type="ECO:0000305" key="6">
    <source>
    </source>
</evidence>
<evidence type="ECO:0000305" key="7">
    <source>
    </source>
</evidence>
<evidence type="ECO:0007829" key="8">
    <source>
        <dbReference type="PDB" id="7UY4"/>
    </source>
</evidence>
<name>S3AD_ECOLX</name>
<reference key="1">
    <citation type="journal article" date="1988" name="Mol. Gen. Genet.">
        <title>Site-specific recombination promotes linkage between trimethoprim- and sulfonamide resistance genes. Sequence characterization of dhfrV and sulI and a recombination active locus of Tn21.</title>
        <authorList>
            <person name="Sundstroem L."/>
            <person name="Radstroem P."/>
            <person name="Swedberg G."/>
            <person name="Skoeld O."/>
        </authorList>
    </citation>
    <scope>NUCLEOTIDE SEQUENCE [GENOMIC DNA]</scope>
    <source>
        <transposon>Tn21</transposon>
    </source>
</reference>
<reference key="2">
    <citation type="journal article" date="1985" name="Nucleic Acids Res.">
        <title>Nucleotide sequence of the transposon Tn7 gene encoding an aminoglycoside-modifying enzyme, 3''(9)-O-nucleotidyltransferase.</title>
        <authorList>
            <person name="Fling M.E."/>
            <person name="Kopf J."/>
            <person name="Richards C."/>
        </authorList>
    </citation>
    <scope>NUCLEOTIDE SEQUENCE [GENOMIC DNA]</scope>
    <scope>FUNCTION IN SPECTINOMYCIN AND STREPTOMYCIN RESISTANCE</scope>
    <scope>DISRUPTION PHENOTYPE</scope>
    <source>
        <transposon>Tn7</transposon>
    </source>
</reference>
<reference key="3">
    <citation type="journal article" date="1985" name="Plasmid">
        <title>Nucleotide sequence analysis of a gene encoding a streptomycin/spectinomycin adenylyltransferase.</title>
        <authorList>
            <person name="Hollingshead S."/>
            <person name="Vapnek D."/>
        </authorList>
    </citation>
    <scope>NUCLEOTIDE SEQUENCE [GENOMIC DNA]</scope>
    <scope>FUNCTION IN SPECTINOMYCIN AND STREPTOMYCIN RESISTANCE</scope>
    <scope>DISRUPTION PHENOTYPE</scope>
    <source>
        <plasmid>IncFII R538-1</plasmid>
    </source>
</reference>
<reference key="4">
    <citation type="journal article" date="1987" name="Nucleic Acids Res.">
        <title>pKM101 is an IS46-promoted deletion of R46.</title>
        <authorList>
            <person name="Hall R.M."/>
        </authorList>
    </citation>
    <scope>NUCLEOTIDE SEQUENCE [GENOMIC DNA] OF 1-63</scope>
    <source>
        <plasmid>IncN pKM101</plasmid>
    </source>
</reference>
<reference key="5">
    <citation type="journal article" date="1987" name="Nucleic Acids Res.">
        <title>The region of the IncN plasmid R46 coding for resistance to beta-lactam antibiotics, streptomycin/spectinomycin and sulphonamides is closely related to antibiotic resistance segments found in IncW plasmids and in Tn21-like transposons.</title>
        <authorList>
            <person name="Hall R.M."/>
            <person name="Vockler C."/>
        </authorList>
    </citation>
    <scope>NUCLEOTIDE SEQUENCE [GENOMIC DNA] OF 1-63</scope>
    <source>
        <plasmid>IncN R46</plasmid>
    </source>
</reference>
<reference key="6">
    <citation type="journal article" date="1987" name="Proc. Natl. Acad. Sci. U.S.A.">
        <title>Precise insertion of antibiotic resistance determinants into Tn21-like transposons: nucleotide sequence of the OXA-1 beta-lactamase gene.</title>
        <authorList>
            <person name="Ouellette M."/>
            <person name="Bissonnette L."/>
            <person name="Roy P.H."/>
        </authorList>
    </citation>
    <scope>NUCLEOTIDE SEQUENCE [GENOMIC DNA] OF 1-42</scope>
    <source>
        <plasmid>RGN238</plasmid>
    </source>
</reference>
<reference key="7">
    <citation type="journal article" date="1990" name="Antimicrob. Agents Chemother.">
        <title>The dhfrI trimethoprim resistance gene of Tn7 can be found at specific sites in other genetic surroundings.</title>
        <authorList>
            <person name="Sundstroem L."/>
            <person name="Skoeld O."/>
        </authorList>
    </citation>
    <scope>NUCLEOTIDE SEQUENCE [GENOMIC DNA] OF 1-72 AND 188-263</scope>
    <source>
        <plasmid>pLMO229</plasmid>
    </source>
</reference>